<reference key="1">
    <citation type="journal article" date="2002" name="Genomics">
        <title>The human and mouse replication-dependent histone genes.</title>
        <authorList>
            <person name="Marzluff W.F."/>
            <person name="Gongidi P."/>
            <person name="Woods K.R."/>
            <person name="Jin J."/>
            <person name="Maltais L.J."/>
        </authorList>
    </citation>
    <scope>NUCLEOTIDE SEQUENCE [GENOMIC DNA]</scope>
</reference>
<reference key="2">
    <citation type="journal article" date="2004" name="Nat. Genet.">
        <title>Complete sequencing and characterization of 21,243 full-length human cDNAs.</title>
        <authorList>
            <person name="Ota T."/>
            <person name="Suzuki Y."/>
            <person name="Nishikawa T."/>
            <person name="Otsuki T."/>
            <person name="Sugiyama T."/>
            <person name="Irie R."/>
            <person name="Wakamatsu A."/>
            <person name="Hayashi K."/>
            <person name="Sato H."/>
            <person name="Nagai K."/>
            <person name="Kimura K."/>
            <person name="Makita H."/>
            <person name="Sekine M."/>
            <person name="Obayashi M."/>
            <person name="Nishi T."/>
            <person name="Shibahara T."/>
            <person name="Tanaka T."/>
            <person name="Ishii S."/>
            <person name="Yamamoto J."/>
            <person name="Saito K."/>
            <person name="Kawai Y."/>
            <person name="Isono Y."/>
            <person name="Nakamura Y."/>
            <person name="Nagahari K."/>
            <person name="Murakami K."/>
            <person name="Yasuda T."/>
            <person name="Iwayanagi T."/>
            <person name="Wagatsuma M."/>
            <person name="Shiratori A."/>
            <person name="Sudo H."/>
            <person name="Hosoiri T."/>
            <person name="Kaku Y."/>
            <person name="Kodaira H."/>
            <person name="Kondo H."/>
            <person name="Sugawara M."/>
            <person name="Takahashi M."/>
            <person name="Kanda K."/>
            <person name="Yokoi T."/>
            <person name="Furuya T."/>
            <person name="Kikkawa E."/>
            <person name="Omura Y."/>
            <person name="Abe K."/>
            <person name="Kamihara K."/>
            <person name="Katsuta N."/>
            <person name="Sato K."/>
            <person name="Tanikawa M."/>
            <person name="Yamazaki M."/>
            <person name="Ninomiya K."/>
            <person name="Ishibashi T."/>
            <person name="Yamashita H."/>
            <person name="Murakawa K."/>
            <person name="Fujimori K."/>
            <person name="Tanai H."/>
            <person name="Kimata M."/>
            <person name="Watanabe M."/>
            <person name="Hiraoka S."/>
            <person name="Chiba Y."/>
            <person name="Ishida S."/>
            <person name="Ono Y."/>
            <person name="Takiguchi S."/>
            <person name="Watanabe S."/>
            <person name="Yosida M."/>
            <person name="Hotuta T."/>
            <person name="Kusano J."/>
            <person name="Kanehori K."/>
            <person name="Takahashi-Fujii A."/>
            <person name="Hara H."/>
            <person name="Tanase T.-O."/>
            <person name="Nomura Y."/>
            <person name="Togiya S."/>
            <person name="Komai F."/>
            <person name="Hara R."/>
            <person name="Takeuchi K."/>
            <person name="Arita M."/>
            <person name="Imose N."/>
            <person name="Musashino K."/>
            <person name="Yuuki H."/>
            <person name="Oshima A."/>
            <person name="Sasaki N."/>
            <person name="Aotsuka S."/>
            <person name="Yoshikawa Y."/>
            <person name="Matsunawa H."/>
            <person name="Ichihara T."/>
            <person name="Shiohata N."/>
            <person name="Sano S."/>
            <person name="Moriya S."/>
            <person name="Momiyama H."/>
            <person name="Satoh N."/>
            <person name="Takami S."/>
            <person name="Terashima Y."/>
            <person name="Suzuki O."/>
            <person name="Nakagawa S."/>
            <person name="Senoh A."/>
            <person name="Mizoguchi H."/>
            <person name="Goto Y."/>
            <person name="Shimizu F."/>
            <person name="Wakebe H."/>
            <person name="Hishigaki H."/>
            <person name="Watanabe T."/>
            <person name="Sugiyama A."/>
            <person name="Takemoto M."/>
            <person name="Kawakami B."/>
            <person name="Yamazaki M."/>
            <person name="Watanabe K."/>
            <person name="Kumagai A."/>
            <person name="Itakura S."/>
            <person name="Fukuzumi Y."/>
            <person name="Fujimori Y."/>
            <person name="Komiyama M."/>
            <person name="Tashiro H."/>
            <person name="Tanigami A."/>
            <person name="Fujiwara T."/>
            <person name="Ono T."/>
            <person name="Yamada K."/>
            <person name="Fujii Y."/>
            <person name="Ozaki K."/>
            <person name="Hirao M."/>
            <person name="Ohmori Y."/>
            <person name="Kawabata A."/>
            <person name="Hikiji T."/>
            <person name="Kobatake N."/>
            <person name="Inagaki H."/>
            <person name="Ikema Y."/>
            <person name="Okamoto S."/>
            <person name="Okitani R."/>
            <person name="Kawakami T."/>
            <person name="Noguchi S."/>
            <person name="Itoh T."/>
            <person name="Shigeta K."/>
            <person name="Senba T."/>
            <person name="Matsumura K."/>
            <person name="Nakajima Y."/>
            <person name="Mizuno T."/>
            <person name="Morinaga M."/>
            <person name="Sasaki M."/>
            <person name="Togashi T."/>
            <person name="Oyama M."/>
            <person name="Hata H."/>
            <person name="Watanabe M."/>
            <person name="Komatsu T."/>
            <person name="Mizushima-Sugano J."/>
            <person name="Satoh T."/>
            <person name="Shirai Y."/>
            <person name="Takahashi Y."/>
            <person name="Nakagawa K."/>
            <person name="Okumura K."/>
            <person name="Nagase T."/>
            <person name="Nomura N."/>
            <person name="Kikuchi H."/>
            <person name="Masuho Y."/>
            <person name="Yamashita R."/>
            <person name="Nakai K."/>
            <person name="Yada T."/>
            <person name="Nakamura Y."/>
            <person name="Ohara O."/>
            <person name="Isogai T."/>
            <person name="Sugano S."/>
        </authorList>
    </citation>
    <scope>NUCLEOTIDE SEQUENCE [LARGE SCALE MRNA]</scope>
    <source>
        <tissue>Tongue</tissue>
    </source>
</reference>
<reference key="3">
    <citation type="journal article" date="2006" name="Nature">
        <title>The DNA sequence and biological annotation of human chromosome 1.</title>
        <authorList>
            <person name="Gregory S.G."/>
            <person name="Barlow K.F."/>
            <person name="McLay K.E."/>
            <person name="Kaul R."/>
            <person name="Swarbreck D."/>
            <person name="Dunham A."/>
            <person name="Scott C.E."/>
            <person name="Howe K.L."/>
            <person name="Woodfine K."/>
            <person name="Spencer C.C.A."/>
            <person name="Jones M.C."/>
            <person name="Gillson C."/>
            <person name="Searle S."/>
            <person name="Zhou Y."/>
            <person name="Kokocinski F."/>
            <person name="McDonald L."/>
            <person name="Evans R."/>
            <person name="Phillips K."/>
            <person name="Atkinson A."/>
            <person name="Cooper R."/>
            <person name="Jones C."/>
            <person name="Hall R.E."/>
            <person name="Andrews T.D."/>
            <person name="Lloyd C."/>
            <person name="Ainscough R."/>
            <person name="Almeida J.P."/>
            <person name="Ambrose K.D."/>
            <person name="Anderson F."/>
            <person name="Andrew R.W."/>
            <person name="Ashwell R.I.S."/>
            <person name="Aubin K."/>
            <person name="Babbage A.K."/>
            <person name="Bagguley C.L."/>
            <person name="Bailey J."/>
            <person name="Beasley H."/>
            <person name="Bethel G."/>
            <person name="Bird C.P."/>
            <person name="Bray-Allen S."/>
            <person name="Brown J.Y."/>
            <person name="Brown A.J."/>
            <person name="Buckley D."/>
            <person name="Burton J."/>
            <person name="Bye J."/>
            <person name="Carder C."/>
            <person name="Chapman J.C."/>
            <person name="Clark S.Y."/>
            <person name="Clarke G."/>
            <person name="Clee C."/>
            <person name="Cobley V."/>
            <person name="Collier R.E."/>
            <person name="Corby N."/>
            <person name="Coville G.J."/>
            <person name="Davies J."/>
            <person name="Deadman R."/>
            <person name="Dunn M."/>
            <person name="Earthrowl M."/>
            <person name="Ellington A.G."/>
            <person name="Errington H."/>
            <person name="Frankish A."/>
            <person name="Frankland J."/>
            <person name="French L."/>
            <person name="Garner P."/>
            <person name="Garnett J."/>
            <person name="Gay L."/>
            <person name="Ghori M.R.J."/>
            <person name="Gibson R."/>
            <person name="Gilby L.M."/>
            <person name="Gillett W."/>
            <person name="Glithero R.J."/>
            <person name="Grafham D.V."/>
            <person name="Griffiths C."/>
            <person name="Griffiths-Jones S."/>
            <person name="Grocock R."/>
            <person name="Hammond S."/>
            <person name="Harrison E.S.I."/>
            <person name="Hart E."/>
            <person name="Haugen E."/>
            <person name="Heath P.D."/>
            <person name="Holmes S."/>
            <person name="Holt K."/>
            <person name="Howden P.J."/>
            <person name="Hunt A.R."/>
            <person name="Hunt S.E."/>
            <person name="Hunter G."/>
            <person name="Isherwood J."/>
            <person name="James R."/>
            <person name="Johnson C."/>
            <person name="Johnson D."/>
            <person name="Joy A."/>
            <person name="Kay M."/>
            <person name="Kershaw J.K."/>
            <person name="Kibukawa M."/>
            <person name="Kimberley A.M."/>
            <person name="King A."/>
            <person name="Knights A.J."/>
            <person name="Lad H."/>
            <person name="Laird G."/>
            <person name="Lawlor S."/>
            <person name="Leongamornlert D.A."/>
            <person name="Lloyd D.M."/>
            <person name="Loveland J."/>
            <person name="Lovell J."/>
            <person name="Lush M.J."/>
            <person name="Lyne R."/>
            <person name="Martin S."/>
            <person name="Mashreghi-Mohammadi M."/>
            <person name="Matthews L."/>
            <person name="Matthews N.S.W."/>
            <person name="McLaren S."/>
            <person name="Milne S."/>
            <person name="Mistry S."/>
            <person name="Moore M.J.F."/>
            <person name="Nickerson T."/>
            <person name="O'Dell C.N."/>
            <person name="Oliver K."/>
            <person name="Palmeiri A."/>
            <person name="Palmer S.A."/>
            <person name="Parker A."/>
            <person name="Patel D."/>
            <person name="Pearce A.V."/>
            <person name="Peck A.I."/>
            <person name="Pelan S."/>
            <person name="Phelps K."/>
            <person name="Phillimore B.J."/>
            <person name="Plumb R."/>
            <person name="Rajan J."/>
            <person name="Raymond C."/>
            <person name="Rouse G."/>
            <person name="Saenphimmachak C."/>
            <person name="Sehra H.K."/>
            <person name="Sheridan E."/>
            <person name="Shownkeen R."/>
            <person name="Sims S."/>
            <person name="Skuce C.D."/>
            <person name="Smith M."/>
            <person name="Steward C."/>
            <person name="Subramanian S."/>
            <person name="Sycamore N."/>
            <person name="Tracey A."/>
            <person name="Tromans A."/>
            <person name="Van Helmond Z."/>
            <person name="Wall M."/>
            <person name="Wallis J.M."/>
            <person name="White S."/>
            <person name="Whitehead S.L."/>
            <person name="Wilkinson J.E."/>
            <person name="Willey D.L."/>
            <person name="Williams H."/>
            <person name="Wilming L."/>
            <person name="Wray P.W."/>
            <person name="Wu Z."/>
            <person name="Coulson A."/>
            <person name="Vaudin M."/>
            <person name="Sulston J.E."/>
            <person name="Durbin R.M."/>
            <person name="Hubbard T."/>
            <person name="Wooster R."/>
            <person name="Dunham I."/>
            <person name="Carter N.P."/>
            <person name="McVean G."/>
            <person name="Ross M.T."/>
            <person name="Harrow J."/>
            <person name="Olson M.V."/>
            <person name="Beck S."/>
            <person name="Rogers J."/>
            <person name="Bentley D.R."/>
        </authorList>
    </citation>
    <scope>NUCLEOTIDE SEQUENCE [LARGE SCALE GENOMIC DNA]</scope>
    <source>
        <tissue>Tongue</tissue>
    </source>
</reference>
<reference key="4">
    <citation type="submission" date="2005-07" db="EMBL/GenBank/DDBJ databases">
        <authorList>
            <person name="Mural R.J."/>
            <person name="Istrail S."/>
            <person name="Sutton G.G."/>
            <person name="Florea L."/>
            <person name="Halpern A.L."/>
            <person name="Mobarry C.M."/>
            <person name="Lippert R."/>
            <person name="Walenz B."/>
            <person name="Shatkay H."/>
            <person name="Dew I."/>
            <person name="Miller J.R."/>
            <person name="Flanigan M.J."/>
            <person name="Edwards N.J."/>
            <person name="Bolanos R."/>
            <person name="Fasulo D."/>
            <person name="Halldorsson B.V."/>
            <person name="Hannenhalli S."/>
            <person name="Turner R."/>
            <person name="Yooseph S."/>
            <person name="Lu F."/>
            <person name="Nusskern D.R."/>
            <person name="Shue B.C."/>
            <person name="Zheng X.H."/>
            <person name="Zhong F."/>
            <person name="Delcher A.L."/>
            <person name="Huson D.H."/>
            <person name="Kravitz S.A."/>
            <person name="Mouchard L."/>
            <person name="Reinert K."/>
            <person name="Remington K.A."/>
            <person name="Clark A.G."/>
            <person name="Waterman M.S."/>
            <person name="Eichler E.E."/>
            <person name="Adams M.D."/>
            <person name="Hunkapiller M.W."/>
            <person name="Myers E.W."/>
            <person name="Venter J.C."/>
        </authorList>
    </citation>
    <scope>NUCLEOTIDE SEQUENCE [LARGE SCALE GENOMIC DNA]</scope>
</reference>
<reference key="5">
    <citation type="journal article" date="2004" name="Genome Res.">
        <title>The status, quality, and expansion of the NIH full-length cDNA project: the Mammalian Gene Collection (MGC).</title>
        <authorList>
            <consortium name="The MGC Project Team"/>
        </authorList>
    </citation>
    <scope>NUCLEOTIDE SEQUENCE [LARGE SCALE MRNA]</scope>
</reference>
<reference key="6">
    <citation type="journal article" date="2006" name="Mol. Cell. Proteomics">
        <title>Quantitative proteomic analysis of post-translational modifications of human histones.</title>
        <authorList>
            <person name="Beck H.C."/>
            <person name="Nielsen E.C."/>
            <person name="Matthiesen R."/>
            <person name="Jensen L.H."/>
            <person name="Sehested M."/>
            <person name="Finn P."/>
            <person name="Grauslund M."/>
            <person name="Hansen A.M."/>
            <person name="Jensen O.N."/>
        </authorList>
    </citation>
    <scope>PROTEIN SEQUENCE OF 7-24</scope>
    <scope>ACETYLATION AT LYS-6; LYS-12; LYS-13; LYS-16; LYS-17 AND LYS-21</scope>
    <scope>METHYLATION AT LYS-47; LYS-58 AND LYS-109</scope>
    <scope>UBIQUITINATION AT LYS-121</scope>
    <scope>IDENTIFICATION BY MASS SPECTROMETRY</scope>
</reference>
<reference key="7">
    <citation type="journal article" date="2003" name="Cell">
        <title>Apoptotic phosphorylation of histone H2B is mediated by mammalian sterile twenty kinase.</title>
        <authorList>
            <person name="Cheung W.L."/>
            <person name="Ajiro K."/>
            <person name="Samejima K."/>
            <person name="Kloc M."/>
            <person name="Cheung P."/>
            <person name="Mizzen C.A."/>
            <person name="Beeser A."/>
            <person name="Etkin L.D."/>
            <person name="Chernoff J."/>
            <person name="Earnshaw W.C."/>
            <person name="Allis C.D."/>
        </authorList>
    </citation>
    <scope>PHOSPHORYLATION AT SER-15</scope>
</reference>
<reference key="8">
    <citation type="journal article" date="2005" name="Mol. Cell">
        <title>Monoubiquitination of human histone H2B: the factors involved and their roles in HOX gene regulation.</title>
        <authorList>
            <person name="Zhu B."/>
            <person name="Zheng Y."/>
            <person name="Pham A.-D."/>
            <person name="Mandal S.S."/>
            <person name="Erdjument-Bromage H."/>
            <person name="Tempst P."/>
            <person name="Reinberg D."/>
        </authorList>
    </citation>
    <scope>UBIQUITINATION AT LYS-121</scope>
</reference>
<reference key="9">
    <citation type="journal article" date="2005" name="Mol. Cell. Biochem.">
        <title>Inhibition of core histones acetylation by carcinogenic nickel(II).</title>
        <authorList>
            <person name="Golebiowski F."/>
            <person name="Kasprzak K.S."/>
        </authorList>
    </citation>
    <scope>ACETYLATION AT LYS-6; LYS-13; LYS-16 AND LYS-21</scope>
</reference>
<reference key="10">
    <citation type="journal article" date="2006" name="Cell">
        <title>Histone H2B monoubiquitination functions cooperatively with FACT to regulate elongation by RNA polymerase II.</title>
        <authorList>
            <person name="Pavri R."/>
            <person name="Zhu B."/>
            <person name="Li G."/>
            <person name="Trojer P."/>
            <person name="Mandal S."/>
            <person name="Shilatifard A."/>
            <person name="Reinberg D."/>
        </authorList>
    </citation>
    <scope>UBIQUITINATION AT LYS-121</scope>
</reference>
<reference key="11">
    <citation type="journal article" date="2006" name="Mol. Cell. Proteomics">
        <title>Characterization of histones H2A and H2B variants and their post-translational modifications by mass spectrometry.</title>
        <authorList>
            <person name="Bonenfant D."/>
            <person name="Coulot M."/>
            <person name="Towbin H."/>
            <person name="Schindler P."/>
            <person name="van Oostrum J."/>
        </authorList>
    </citation>
    <scope>IDENTIFICATION BY MASS SPECTROMETRY [LARGE SCALE ANALYSIS]</scope>
</reference>
<reference key="12">
    <citation type="journal article" date="2011" name="Cell">
        <title>Identification of 67 histone marks and histone lysine crotonylation as a new type of histone modification.</title>
        <authorList>
            <person name="Tan M."/>
            <person name="Luo H."/>
            <person name="Lee S."/>
            <person name="Jin F."/>
            <person name="Yang J.S."/>
            <person name="Montellier E."/>
            <person name="Buchou T."/>
            <person name="Cheng Z."/>
            <person name="Rousseaux S."/>
            <person name="Rajagopal N."/>
            <person name="Lu Z."/>
            <person name="Ye Z."/>
            <person name="Zhu Q."/>
            <person name="Wysocka J."/>
            <person name="Ye Y."/>
            <person name="Khochbin S."/>
            <person name="Ren B."/>
            <person name="Zhao Y."/>
        </authorList>
    </citation>
    <scope>CROTONYLATION AT LYS-6; LYS-12; LYS-13; LYS-16; LYS-17; LYS-21; LYS-24 AND LYS-35</scope>
</reference>
<reference key="13">
    <citation type="journal article" date="2011" name="Mol. Cell">
        <title>The RING finger protein MSL2 in the MOF complex is an E3 ubiquitin ligase for H2B K34 and is involved in crosstalk with H3 K4 and K79 methylation.</title>
        <authorList>
            <person name="Wu L."/>
            <person name="Zee B.M."/>
            <person name="Wang Y."/>
            <person name="Garcia B.A."/>
            <person name="Dou Y."/>
        </authorList>
    </citation>
    <scope>UBIQUITINATION AT LYS-35</scope>
</reference>
<reference key="14">
    <citation type="journal article" date="2012" name="Mol. Cell. Proteomics">
        <title>Lysine succinylation and lysine malonylation in histones.</title>
        <authorList>
            <person name="Xie Z."/>
            <person name="Dai J."/>
            <person name="Dai L."/>
            <person name="Tan M."/>
            <person name="Cheng Z."/>
            <person name="Wu Y."/>
            <person name="Boeke J.D."/>
            <person name="Zhao Y."/>
        </authorList>
    </citation>
    <scope>SUCCINYLATION AT LYS-35; LYS-117 AND LYS-121</scope>
    <scope>MALONYLATION AT LYS-117</scope>
</reference>
<reference key="15">
    <citation type="journal article" date="2013" name="Genes Dev.">
        <title>USP49 deubiquitinates histone H2B and regulates cotranscriptional pre-mRNA splicing.</title>
        <authorList>
            <person name="Zhang Z."/>
            <person name="Jones A."/>
            <person name="Joo H.Y."/>
            <person name="Zhou D."/>
            <person name="Cao Y."/>
            <person name="Chen S."/>
            <person name="Erdjument-Bromage H."/>
            <person name="Renfrow M."/>
            <person name="He H."/>
            <person name="Tempst P."/>
            <person name="Townes T.M."/>
            <person name="Giles K.E."/>
            <person name="Ma L."/>
            <person name="Wang H."/>
        </authorList>
    </citation>
    <scope>UBIQUITINATION</scope>
    <scope>DEUBIQUITINATION BY USP49</scope>
</reference>
<reference key="16">
    <citation type="journal article" date="2014" name="Nat. Chem. Biol.">
        <title>Lysine 2-hydroxyisobutyrylation is a widely distributed active histone mark.</title>
        <authorList>
            <person name="Dai L."/>
            <person name="Peng C."/>
            <person name="Montellier E."/>
            <person name="Lu Z."/>
            <person name="Chen Y."/>
            <person name="Ishii H."/>
            <person name="Debernardi A."/>
            <person name="Buchou T."/>
            <person name="Rousseaux S."/>
            <person name="Jin F."/>
            <person name="Sabari B.R."/>
            <person name="Deng Z."/>
            <person name="Allis C.D."/>
            <person name="Ren B."/>
            <person name="Khochbin S."/>
            <person name="Zhao Y."/>
        </authorList>
    </citation>
    <scope>HYDROXYBUTYRYLATION AT LYS-6; LYS-13; LYS-21; LYS-24; LYS-25; LYS-35; LYS-44; LYS-47; LYS-58; LYS-86; LYS-109; LYS-117 AND LYS-121</scope>
</reference>
<reference key="17">
    <citation type="journal article" date="2016" name="Mol. Cell">
        <title>Dynamic competing histone H4 K5K8 acetylation and butyrylation are hallmarks of highly active gene promoters.</title>
        <authorList>
            <person name="Goudarzi A."/>
            <person name="Zhang D."/>
            <person name="Huang H."/>
            <person name="Barral S."/>
            <person name="Kwon O.K."/>
            <person name="Qi S."/>
            <person name="Tang Z."/>
            <person name="Buchou T."/>
            <person name="Vitte A.L."/>
            <person name="He T."/>
            <person name="Cheng Z."/>
            <person name="Montellier E."/>
            <person name="Gaucher J."/>
            <person name="Curtet S."/>
            <person name="Debernardi A."/>
            <person name="Charbonnier G."/>
            <person name="Puthier D."/>
            <person name="Petosa C."/>
            <person name="Panne D."/>
            <person name="Rousseaux S."/>
            <person name="Roeder R.G."/>
            <person name="Zhao Y."/>
            <person name="Khochbin S."/>
        </authorList>
    </citation>
    <scope>BUTYRYLATION AT LYS-6 AND LYS-21</scope>
</reference>
<reference key="18">
    <citation type="journal article" date="2016" name="Mol. Cell">
        <title>Metabolic regulation of gene expression by histone lysine beta-hydroxybutyrylation.</title>
        <authorList>
            <person name="Xie Z."/>
            <person name="Zhang D."/>
            <person name="Chung D."/>
            <person name="Tang Z."/>
            <person name="Huang H."/>
            <person name="Dai L."/>
            <person name="Qi S."/>
            <person name="Li J."/>
            <person name="Colak G."/>
            <person name="Chen Y."/>
            <person name="Xia C."/>
            <person name="Peng C."/>
            <person name="Ruan H."/>
            <person name="Kirkey M."/>
            <person name="Wang D."/>
            <person name="Jensen L.M."/>
            <person name="Kwon O.K."/>
            <person name="Lee S."/>
            <person name="Pletcher S.D."/>
            <person name="Tan M."/>
            <person name="Lombard D.B."/>
            <person name="White K.P."/>
            <person name="Zhao H."/>
            <person name="Li J."/>
            <person name="Roeder R.G."/>
            <person name="Yang X."/>
            <person name="Zhao Y."/>
        </authorList>
    </citation>
    <scope>HYDROXYBUTYRYLATION AT LYS-6; LYS-12; LYS-17; LYS-21; LYS-35; LYS-86; LYS-117 AND LYS-121</scope>
</reference>
<reference key="19">
    <citation type="journal article" date="2019" name="Mol. Cell">
        <title>Glutarylation of histone H4 lysine 91 regulates chromatin dynamics.</title>
        <authorList>
            <person name="Bao X."/>
            <person name="Liu Z."/>
            <person name="Zhang W."/>
            <person name="Gladysz K."/>
            <person name="Fung Y.M.E."/>
            <person name="Tian G."/>
            <person name="Xiong Y."/>
            <person name="Wong J.W.H."/>
            <person name="Yuen K.W.Y."/>
            <person name="Li X.D."/>
        </authorList>
    </citation>
    <scope>GLUTARYLATION AT LYS-17; LYS-35; LYS-44; LYS-47; LYS-109; LYS-117 AND LYS-121</scope>
</reference>
<reference key="20">
    <citation type="journal article" date="2019" name="Nature">
        <title>Metabolic regulation of gene expression by histone lactylation.</title>
        <authorList>
            <person name="Zhang D."/>
            <person name="Tang Z."/>
            <person name="Huang H."/>
            <person name="Zhou G."/>
            <person name="Cui C."/>
            <person name="Weng Y."/>
            <person name="Liu W."/>
            <person name="Kim S."/>
            <person name="Lee S."/>
            <person name="Perez-Neut M."/>
            <person name="Ding J."/>
            <person name="Czyz D."/>
            <person name="Hu R."/>
            <person name="Ye Z."/>
            <person name="He M."/>
            <person name="Zheng Y.G."/>
            <person name="Shuman H.A."/>
            <person name="Dai L."/>
            <person name="Ren B."/>
            <person name="Roeder R.G."/>
            <person name="Becker L."/>
            <person name="Zhao Y."/>
        </authorList>
    </citation>
    <scope>LACTYLATION AT LYS-6; LYS-12; LYS-16; LYS-17; LYS-21; LYS-24; LYS-44; LYS-86; LYS-109; LYS-117 AND LYS-121</scope>
</reference>
<reference key="21">
    <citation type="journal article" date="2021" name="Elife">
        <title>Serine ADP-ribosylation marks nucleosomes for ALC1-dependent chromatin remodeling.</title>
        <authorList>
            <person name="Mohapatra J."/>
            <person name="Tashiro K."/>
            <person name="Beckner R.L."/>
            <person name="Sierra J."/>
            <person name="Kilgore J.A."/>
            <person name="Williams N.S."/>
            <person name="Liszczak G."/>
        </authorList>
    </citation>
    <scope>ADP-RIBOSYLATION AT SER-7</scope>
</reference>
<accession>Q8N257</accession>
<accession>A4FU05</accession>
<accession>Q3ZCP6</accession>
<accession>Q5TA30</accession>
<proteinExistence type="evidence at protein level"/>
<evidence type="ECO:0000250" key="1">
    <source>
        <dbReference type="UniProtKB" id="P23527"/>
    </source>
</evidence>
<evidence type="ECO:0000250" key="2">
    <source>
        <dbReference type="UniProtKB" id="P33778"/>
    </source>
</evidence>
<evidence type="ECO:0000250" key="3">
    <source>
        <dbReference type="UniProtKB" id="P58876"/>
    </source>
</evidence>
<evidence type="ECO:0000250" key="4">
    <source>
        <dbReference type="UniProtKB" id="P62807"/>
    </source>
</evidence>
<evidence type="ECO:0000250" key="5">
    <source>
        <dbReference type="UniProtKB" id="Q00729"/>
    </source>
</evidence>
<evidence type="ECO:0000250" key="6">
    <source>
        <dbReference type="UniProtKB" id="Q5QNW6"/>
    </source>
</evidence>
<evidence type="ECO:0000250" key="7">
    <source>
        <dbReference type="UniProtKB" id="Q64475"/>
    </source>
</evidence>
<evidence type="ECO:0000250" key="8">
    <source>
        <dbReference type="UniProtKB" id="Q6ZWY9"/>
    </source>
</evidence>
<evidence type="ECO:0000250" key="9">
    <source>
        <dbReference type="UniProtKB" id="Q96A08"/>
    </source>
</evidence>
<evidence type="ECO:0000256" key="10">
    <source>
        <dbReference type="SAM" id="MobiDB-lite"/>
    </source>
</evidence>
<evidence type="ECO:0000269" key="11">
    <source>
    </source>
</evidence>
<evidence type="ECO:0000269" key="12">
    <source>
    </source>
</evidence>
<evidence type="ECO:0000269" key="13">
    <source>
    </source>
</evidence>
<evidence type="ECO:0000269" key="14">
    <source>
    </source>
</evidence>
<evidence type="ECO:0000269" key="15">
    <source>
    </source>
</evidence>
<evidence type="ECO:0000269" key="16">
    <source>
    </source>
</evidence>
<evidence type="ECO:0000269" key="17">
    <source>
    </source>
</evidence>
<evidence type="ECO:0000269" key="18">
    <source>
    </source>
</evidence>
<evidence type="ECO:0000269" key="19">
    <source>
    </source>
</evidence>
<evidence type="ECO:0000269" key="20">
    <source>
    </source>
</evidence>
<evidence type="ECO:0000269" key="21">
    <source>
    </source>
</evidence>
<evidence type="ECO:0000269" key="22">
    <source>
    </source>
</evidence>
<evidence type="ECO:0000269" key="23">
    <source>
    </source>
</evidence>
<evidence type="ECO:0000269" key="24">
    <source>
    </source>
</evidence>
<evidence type="ECO:0000305" key="25"/>
<evidence type="ECO:0000312" key="26">
    <source>
        <dbReference type="HGNC" id="HGNC:20514"/>
    </source>
</evidence>
<gene>
    <name evidence="26" type="primary">H2BC26</name>
    <name evidence="26" type="synonym">H2BU1</name>
    <name evidence="26" type="synonym">HIST3H2BB</name>
</gene>
<dbReference type="EMBL" id="AY131981">
    <property type="protein sequence ID" value="AAN59962.1"/>
    <property type="molecule type" value="Genomic_DNA"/>
</dbReference>
<dbReference type="EMBL" id="AK091220">
    <property type="protein sequence ID" value="BAC03613.1"/>
    <property type="molecule type" value="mRNA"/>
</dbReference>
<dbReference type="EMBL" id="AL139288">
    <property type="status" value="NOT_ANNOTATED_CDS"/>
    <property type="molecule type" value="Genomic_DNA"/>
</dbReference>
<dbReference type="EMBL" id="CH471098">
    <property type="protein sequence ID" value="EAW69879.1"/>
    <property type="molecule type" value="Genomic_DNA"/>
</dbReference>
<dbReference type="EMBL" id="BC100855">
    <property type="protein sequence ID" value="AAI00856.1"/>
    <property type="molecule type" value="mRNA"/>
</dbReference>
<dbReference type="EMBL" id="BC100856">
    <property type="protein sequence ID" value="AAI00857.1"/>
    <property type="molecule type" value="mRNA"/>
</dbReference>
<dbReference type="EMBL" id="BC100857">
    <property type="protein sequence ID" value="AAI00858.2"/>
    <property type="molecule type" value="mRNA"/>
</dbReference>
<dbReference type="EMBL" id="BC100858">
    <property type="protein sequence ID" value="AAI00859.1"/>
    <property type="molecule type" value="mRNA"/>
</dbReference>
<dbReference type="EMBL" id="BC137467">
    <property type="protein sequence ID" value="AAI37468.1"/>
    <property type="molecule type" value="mRNA"/>
</dbReference>
<dbReference type="EMBL" id="BC137468">
    <property type="protein sequence ID" value="AAI37469.1"/>
    <property type="molecule type" value="mRNA"/>
</dbReference>
<dbReference type="CCDS" id="CCDS1574.1"/>
<dbReference type="RefSeq" id="NP_778225.1">
    <property type="nucleotide sequence ID" value="NM_175055.3"/>
</dbReference>
<dbReference type="PDB" id="6BIZ">
    <property type="method" value="X-ray"/>
    <property type="resolution" value="2.10 A"/>
    <property type="chains" value="C=68-82"/>
</dbReference>
<dbReference type="PDBsum" id="6BIZ"/>
<dbReference type="SMR" id="Q8N257"/>
<dbReference type="BioGRID" id="126106">
    <property type="interactions" value="188"/>
</dbReference>
<dbReference type="CORUM" id="Q8N257"/>
<dbReference type="FunCoup" id="Q8N257">
    <property type="interactions" value="1952"/>
</dbReference>
<dbReference type="IntAct" id="Q8N257">
    <property type="interactions" value="88"/>
</dbReference>
<dbReference type="MINT" id="Q8N257"/>
<dbReference type="STRING" id="9606.ENSP00000479284"/>
<dbReference type="GlyCosmos" id="Q8N257">
    <property type="glycosylation" value="1 site, No reported glycans"/>
</dbReference>
<dbReference type="GlyGen" id="Q8N257">
    <property type="glycosylation" value="2 sites, 1 O-linked glycan (1 site)"/>
</dbReference>
<dbReference type="iPTMnet" id="Q8N257"/>
<dbReference type="MetOSite" id="Q8N257"/>
<dbReference type="PhosphoSitePlus" id="Q8N257"/>
<dbReference type="SwissPalm" id="Q8N257"/>
<dbReference type="BioMuta" id="HIST3H2BB"/>
<dbReference type="DMDM" id="51701598"/>
<dbReference type="jPOST" id="Q8N257"/>
<dbReference type="MassIVE" id="Q8N257"/>
<dbReference type="PaxDb" id="9606-ENSP00000479284"/>
<dbReference type="PeptideAtlas" id="Q8N257"/>
<dbReference type="ProteomicsDB" id="71655"/>
<dbReference type="Pumba" id="Q8N257"/>
<dbReference type="TopDownProteomics" id="Q8N257"/>
<dbReference type="Antibodypedia" id="57242">
    <property type="antibodies" value="50 antibodies from 7 providers"/>
</dbReference>
<dbReference type="DNASU" id="128312"/>
<dbReference type="Ensembl" id="ENST00000620438.2">
    <property type="protein sequence ID" value="ENSP00000479284.1"/>
    <property type="gene ID" value="ENSG00000196890.5"/>
</dbReference>
<dbReference type="Ensembl" id="ENST00000647549.1">
    <property type="protein sequence ID" value="ENSP00000496342.1"/>
    <property type="gene ID" value="ENSG00000285449.1"/>
</dbReference>
<dbReference type="Ensembl" id="ENST00000693095.1">
    <property type="protein sequence ID" value="ENSP00000509901.1"/>
    <property type="gene ID" value="ENSG00000196890.5"/>
</dbReference>
<dbReference type="GeneID" id="128312"/>
<dbReference type="KEGG" id="hsa:128312"/>
<dbReference type="MANE-Select" id="ENST00000693095.1">
    <property type="protein sequence ID" value="ENSP00000509901.1"/>
    <property type="RefSeq nucleotide sequence ID" value="NM_175055.3"/>
    <property type="RefSeq protein sequence ID" value="NP_778225.1"/>
</dbReference>
<dbReference type="UCSC" id="uc001hsz.4">
    <property type="organism name" value="human"/>
</dbReference>
<dbReference type="AGR" id="HGNC:20514"/>
<dbReference type="CTD" id="128312"/>
<dbReference type="GeneCards" id="H2BC26"/>
<dbReference type="HGNC" id="HGNC:20514">
    <property type="gene designation" value="H2BC26"/>
</dbReference>
<dbReference type="HPA" id="ENSG00000196890">
    <property type="expression patterns" value="Tissue enhanced (brain, cervix)"/>
</dbReference>
<dbReference type="MIM" id="615046">
    <property type="type" value="gene"/>
</dbReference>
<dbReference type="neXtProt" id="NX_Q8N257"/>
<dbReference type="OpenTargets" id="ENSG00000196890"/>
<dbReference type="VEuPathDB" id="HostDB:ENSG00000196890"/>
<dbReference type="eggNOG" id="KOG1744">
    <property type="taxonomic scope" value="Eukaryota"/>
</dbReference>
<dbReference type="GeneTree" id="ENSGT01110000267152"/>
<dbReference type="HOGENOM" id="CLU_075666_2_1_1"/>
<dbReference type="InParanoid" id="Q8N257"/>
<dbReference type="OMA" id="CNINSRA"/>
<dbReference type="OrthoDB" id="1733721at2759"/>
<dbReference type="PAN-GO" id="Q8N257">
    <property type="GO annotations" value="2 GO annotations based on evolutionary models"/>
</dbReference>
<dbReference type="PhylomeDB" id="Q8N257"/>
<dbReference type="TreeFam" id="TF300212"/>
<dbReference type="PathwayCommons" id="Q8N257"/>
<dbReference type="Reactome" id="R-HSA-110328">
    <property type="pathway name" value="Recognition and association of DNA glycosylase with site containing an affected pyrimidine"/>
</dbReference>
<dbReference type="Reactome" id="R-HSA-110329">
    <property type="pathway name" value="Cleavage of the damaged pyrimidine"/>
</dbReference>
<dbReference type="Reactome" id="R-HSA-110330">
    <property type="pathway name" value="Recognition and association of DNA glycosylase with site containing an affected purine"/>
</dbReference>
<dbReference type="Reactome" id="R-HSA-110331">
    <property type="pathway name" value="Cleavage of the damaged purine"/>
</dbReference>
<dbReference type="Reactome" id="R-HSA-1221632">
    <property type="pathway name" value="Meiotic synapsis"/>
</dbReference>
<dbReference type="Reactome" id="R-HSA-171306">
    <property type="pathway name" value="Packaging Of Telomere Ends"/>
</dbReference>
<dbReference type="Reactome" id="R-HSA-1912408">
    <property type="pathway name" value="Pre-NOTCH Transcription and Translation"/>
</dbReference>
<dbReference type="Reactome" id="R-HSA-201722">
    <property type="pathway name" value="Formation of the beta-catenin:TCF transactivating complex"/>
</dbReference>
<dbReference type="Reactome" id="R-HSA-212300">
    <property type="pathway name" value="PRC2 methylates histones and DNA"/>
</dbReference>
<dbReference type="Reactome" id="R-HSA-2299718">
    <property type="pathway name" value="Condensation of Prophase Chromosomes"/>
</dbReference>
<dbReference type="Reactome" id="R-HSA-2559580">
    <property type="pathway name" value="Oxidative Stress Induced Senescence"/>
</dbReference>
<dbReference type="Reactome" id="R-HSA-2559582">
    <property type="pathway name" value="Senescence-Associated Secretory Phenotype (SASP)"/>
</dbReference>
<dbReference type="Reactome" id="R-HSA-2559586">
    <property type="pathway name" value="DNA Damage/Telomere Stress Induced Senescence"/>
</dbReference>
<dbReference type="Reactome" id="R-HSA-3214815">
    <property type="pathway name" value="HDACs deacetylate histones"/>
</dbReference>
<dbReference type="Reactome" id="R-HSA-3214847">
    <property type="pathway name" value="HATs acetylate histones"/>
</dbReference>
<dbReference type="Reactome" id="R-HSA-427359">
    <property type="pathway name" value="SIRT1 negatively regulates rRNA expression"/>
</dbReference>
<dbReference type="Reactome" id="R-HSA-427389">
    <property type="pathway name" value="ERCC6 (CSB) and EHMT2 (G9a) positively regulate rRNA expression"/>
</dbReference>
<dbReference type="Reactome" id="R-HSA-427413">
    <property type="pathway name" value="NoRC negatively regulates rRNA expression"/>
</dbReference>
<dbReference type="Reactome" id="R-HSA-5250924">
    <property type="pathway name" value="B-WICH complex positively regulates rRNA expression"/>
</dbReference>
<dbReference type="Reactome" id="R-HSA-5334118">
    <property type="pathway name" value="DNA methylation"/>
</dbReference>
<dbReference type="Reactome" id="R-HSA-5578749">
    <property type="pathway name" value="Transcriptional regulation by small RNAs"/>
</dbReference>
<dbReference type="Reactome" id="R-HSA-5617472">
    <property type="pathway name" value="Activation of anterior HOX genes in hindbrain development during early embryogenesis"/>
</dbReference>
<dbReference type="Reactome" id="R-HSA-5625886">
    <property type="pathway name" value="Activated PKN1 stimulates transcription of AR (androgen receptor) regulated genes KLK2 and KLK3"/>
</dbReference>
<dbReference type="Reactome" id="R-HSA-5689880">
    <property type="pathway name" value="Ub-specific processing proteases"/>
</dbReference>
<dbReference type="Reactome" id="R-HSA-5693565">
    <property type="pathway name" value="Recruitment and ATM-mediated phosphorylation of repair and signaling proteins at DNA double strand breaks"/>
</dbReference>
<dbReference type="Reactome" id="R-HSA-5693571">
    <property type="pathway name" value="Nonhomologous End-Joining (NHEJ)"/>
</dbReference>
<dbReference type="Reactome" id="R-HSA-5693607">
    <property type="pathway name" value="Processing of DNA double-strand break ends"/>
</dbReference>
<dbReference type="Reactome" id="R-HSA-606279">
    <property type="pathway name" value="Deposition of new CENPA-containing nucleosomes at the centromere"/>
</dbReference>
<dbReference type="Reactome" id="R-HSA-68616">
    <property type="pathway name" value="Assembly of the ORC complex at the origin of replication"/>
</dbReference>
<dbReference type="Reactome" id="R-HSA-69473">
    <property type="pathway name" value="G2/M DNA damage checkpoint"/>
</dbReference>
<dbReference type="Reactome" id="R-HSA-73728">
    <property type="pathway name" value="RNA Polymerase I Promoter Opening"/>
</dbReference>
<dbReference type="Reactome" id="R-HSA-73772">
    <property type="pathway name" value="RNA Polymerase I Promoter Escape"/>
</dbReference>
<dbReference type="Reactome" id="R-HSA-8936459">
    <property type="pathway name" value="RUNX1 regulates genes involved in megakaryocyte differentiation and platelet function"/>
</dbReference>
<dbReference type="Reactome" id="R-HSA-8939236">
    <property type="pathway name" value="RUNX1 regulates transcription of genes involved in differentiation of HSCs"/>
</dbReference>
<dbReference type="Reactome" id="R-HSA-9018519">
    <property type="pathway name" value="Estrogen-dependent gene expression"/>
</dbReference>
<dbReference type="Reactome" id="R-HSA-912446">
    <property type="pathway name" value="Meiotic recombination"/>
</dbReference>
<dbReference type="Reactome" id="R-HSA-9609690">
    <property type="pathway name" value="HCMV Early Events"/>
</dbReference>
<dbReference type="Reactome" id="R-HSA-9610379">
    <property type="pathway name" value="HCMV Late Events"/>
</dbReference>
<dbReference type="Reactome" id="R-HSA-9616222">
    <property type="pathway name" value="Transcriptional regulation of granulopoiesis"/>
</dbReference>
<dbReference type="Reactome" id="R-HSA-9670095">
    <property type="pathway name" value="Inhibition of DNA recombination at telomere"/>
</dbReference>
<dbReference type="Reactome" id="R-HSA-9710421">
    <property type="pathway name" value="Defective pyroptosis"/>
</dbReference>
<dbReference type="Reactome" id="R-HSA-977225">
    <property type="pathway name" value="Amyloid fiber formation"/>
</dbReference>
<dbReference type="Reactome" id="R-HSA-9821002">
    <property type="pathway name" value="Chromatin modifications during the maternal to zygotic transition (MZT)"/>
</dbReference>
<dbReference type="Reactome" id="R-HSA-9821993">
    <property type="pathway name" value="Replacement of protamines by nucleosomes in the male pronucleus"/>
</dbReference>
<dbReference type="Reactome" id="R-HSA-9841922">
    <property type="pathway name" value="MLL4 and MLL3 complexes regulate expression of PPARG target genes in adipogenesis and hepatic steatosis"/>
</dbReference>
<dbReference type="Reactome" id="R-HSA-9843940">
    <property type="pathway name" value="Regulation of endogenous retroelements by KRAB-ZFP proteins"/>
</dbReference>
<dbReference type="Reactome" id="R-HSA-9843970">
    <property type="pathway name" value="Regulation of endogenous retroelements by the Human Silencing Hub (HUSH) complex"/>
</dbReference>
<dbReference type="Reactome" id="R-HSA-9845323">
    <property type="pathway name" value="Regulation of endogenous retroelements by Piwi-interacting RNAs (piRNAs)"/>
</dbReference>
<dbReference type="SignaLink" id="Q8N257"/>
<dbReference type="SIGNOR" id="Q8N257"/>
<dbReference type="BioGRID-ORCS" id="128312">
    <property type="hits" value="58 hits in 1142 CRISPR screens"/>
</dbReference>
<dbReference type="ChiTaRS" id="HIST3H2BB">
    <property type="organism name" value="human"/>
</dbReference>
<dbReference type="GeneWiki" id="HIST3H2BB"/>
<dbReference type="GenomeRNAi" id="128312"/>
<dbReference type="Pharos" id="Q8N257">
    <property type="development level" value="Tbio"/>
</dbReference>
<dbReference type="PRO" id="PR:Q8N257"/>
<dbReference type="Proteomes" id="UP000005640">
    <property type="component" value="Chromosome 1"/>
</dbReference>
<dbReference type="RNAct" id="Q8N257">
    <property type="molecule type" value="protein"/>
</dbReference>
<dbReference type="Bgee" id="ENSG00000196890">
    <property type="expression patterns" value="Expressed in bone marrow cell and 95 other cell types or tissues"/>
</dbReference>
<dbReference type="GO" id="GO:0005829">
    <property type="term" value="C:cytosol"/>
    <property type="evidence" value="ECO:0000314"/>
    <property type="project" value="HPA"/>
</dbReference>
<dbReference type="GO" id="GO:0005654">
    <property type="term" value="C:nucleoplasm"/>
    <property type="evidence" value="ECO:0000314"/>
    <property type="project" value="HPA"/>
</dbReference>
<dbReference type="GO" id="GO:0000786">
    <property type="term" value="C:nucleosome"/>
    <property type="evidence" value="ECO:0007669"/>
    <property type="project" value="UniProtKB-KW"/>
</dbReference>
<dbReference type="GO" id="GO:0005634">
    <property type="term" value="C:nucleus"/>
    <property type="evidence" value="ECO:0000314"/>
    <property type="project" value="UniProtKB"/>
</dbReference>
<dbReference type="GO" id="GO:0003677">
    <property type="term" value="F:DNA binding"/>
    <property type="evidence" value="ECO:0007669"/>
    <property type="project" value="UniProtKB-KW"/>
</dbReference>
<dbReference type="GO" id="GO:0046982">
    <property type="term" value="F:protein heterodimerization activity"/>
    <property type="evidence" value="ECO:0007669"/>
    <property type="project" value="InterPro"/>
</dbReference>
<dbReference type="GO" id="GO:0030527">
    <property type="term" value="F:structural constituent of chromatin"/>
    <property type="evidence" value="ECO:0007669"/>
    <property type="project" value="InterPro"/>
</dbReference>
<dbReference type="CDD" id="cd22910">
    <property type="entry name" value="HFD_H2B"/>
    <property type="match status" value="1"/>
</dbReference>
<dbReference type="FunFam" id="1.10.20.10:FF:000003">
    <property type="entry name" value="Histone H2B"/>
    <property type="match status" value="1"/>
</dbReference>
<dbReference type="Gene3D" id="1.10.20.10">
    <property type="entry name" value="Histone, subunit A"/>
    <property type="match status" value="1"/>
</dbReference>
<dbReference type="InterPro" id="IPR009072">
    <property type="entry name" value="Histone-fold"/>
</dbReference>
<dbReference type="InterPro" id="IPR007125">
    <property type="entry name" value="Histone_H2A/H2B/H3"/>
</dbReference>
<dbReference type="InterPro" id="IPR000558">
    <property type="entry name" value="Histone_H2B"/>
</dbReference>
<dbReference type="InterPro" id="IPR055333">
    <property type="entry name" value="HISTONE_H2B_site"/>
</dbReference>
<dbReference type="PANTHER" id="PTHR23428">
    <property type="entry name" value="HISTONE H2B"/>
    <property type="match status" value="1"/>
</dbReference>
<dbReference type="Pfam" id="PF00125">
    <property type="entry name" value="Histone"/>
    <property type="match status" value="1"/>
</dbReference>
<dbReference type="PRINTS" id="PR00621">
    <property type="entry name" value="HISTONEH2B"/>
</dbReference>
<dbReference type="SMART" id="SM00427">
    <property type="entry name" value="H2B"/>
    <property type="match status" value="1"/>
</dbReference>
<dbReference type="SUPFAM" id="SSF47113">
    <property type="entry name" value="Histone-fold"/>
    <property type="match status" value="1"/>
</dbReference>
<dbReference type="PROSITE" id="PS00357">
    <property type="entry name" value="HISTONE_H2B"/>
    <property type="match status" value="1"/>
</dbReference>
<protein>
    <recommendedName>
        <fullName>Histone H2B type 3-B</fullName>
    </recommendedName>
    <alternativeName>
        <fullName>H2B type 12</fullName>
    </alternativeName>
    <alternativeName>
        <fullName evidence="26">H2B-clustered histone 26</fullName>
    </alternativeName>
    <alternativeName>
        <fullName evidence="26">H2B.U histone 1</fullName>
    </alternativeName>
</protein>
<feature type="initiator methionine" description="Removed" evidence="1">
    <location>
        <position position="1"/>
    </location>
</feature>
<feature type="chain" id="PRO_0000071837" description="Histone H2B type 3-B">
    <location>
        <begin position="2"/>
        <end position="126"/>
    </location>
</feature>
<feature type="region of interest" description="Disordered" evidence="10">
    <location>
        <begin position="1"/>
        <end position="35"/>
    </location>
</feature>
<feature type="compositionally biased region" description="Low complexity" evidence="10">
    <location>
        <begin position="1"/>
        <end position="12"/>
    </location>
</feature>
<feature type="modified residue" description="N-acetylproline" evidence="1">
    <location>
        <position position="2"/>
    </location>
</feature>
<feature type="modified residue" description="N6-(2-hydroxyisobutyryl)lysine; alternate" evidence="19">
    <location>
        <position position="6"/>
    </location>
</feature>
<feature type="modified residue" description="N6-(beta-hydroxybutyryl)lysine; alternate" evidence="21">
    <location>
        <position position="6"/>
    </location>
</feature>
<feature type="modified residue" description="N6-acetyllysine; alternate" evidence="12 14">
    <location>
        <position position="6"/>
    </location>
</feature>
<feature type="modified residue" description="N6-butyryllysine; alternate" evidence="20">
    <location>
        <position position="6"/>
    </location>
</feature>
<feature type="modified residue" description="N6-crotonyllysine; alternate" evidence="17">
    <location>
        <position position="6"/>
    </location>
</feature>
<feature type="modified residue" description="N6-lactoyllysine; alternate" evidence="23">
    <location>
        <position position="6"/>
    </location>
</feature>
<feature type="modified residue" description="ADP-ribosylserine" evidence="24">
    <location>
        <position position="7"/>
    </location>
</feature>
<feature type="modified residue" description="N6-(beta-hydroxybutyryl)lysine; alternate" evidence="21">
    <location>
        <position position="12"/>
    </location>
</feature>
<feature type="modified residue" description="N6-acetyllysine; alternate" evidence="14">
    <location>
        <position position="12"/>
    </location>
</feature>
<feature type="modified residue" description="N6-crotonyllysine; alternate" evidence="17">
    <location>
        <position position="12"/>
    </location>
</feature>
<feature type="modified residue" description="N6-lactoyllysine; alternate" evidence="23">
    <location>
        <position position="12"/>
    </location>
</feature>
<feature type="modified residue" description="N6-(2-hydroxyisobutyryl)lysine; alternate" evidence="19">
    <location>
        <position position="13"/>
    </location>
</feature>
<feature type="modified residue" description="N6-acetyllysine; alternate" evidence="12 14">
    <location>
        <position position="13"/>
    </location>
</feature>
<feature type="modified residue" description="N6-crotonyllysine; alternate" evidence="17">
    <location>
        <position position="13"/>
    </location>
</feature>
<feature type="modified residue" description="Phosphoserine; by STK4/MST1" evidence="11">
    <location>
        <position position="15"/>
    </location>
</feature>
<feature type="modified residue" description="N6-acetyllysine; alternate" evidence="12 14">
    <location>
        <position position="16"/>
    </location>
</feature>
<feature type="modified residue" description="N6-crotonyllysine; alternate" evidence="17">
    <location>
        <position position="16"/>
    </location>
</feature>
<feature type="modified residue" description="N6-lactoyllysine; alternate" evidence="23">
    <location>
        <position position="16"/>
    </location>
</feature>
<feature type="modified residue" description="N6-(beta-hydroxybutyryl)lysine; alternate" evidence="21">
    <location>
        <position position="17"/>
    </location>
</feature>
<feature type="modified residue" description="N6-acetyllysine; alternate" evidence="14">
    <location>
        <position position="17"/>
    </location>
</feature>
<feature type="modified residue" description="N6-crotonyllysine; alternate" evidence="17">
    <location>
        <position position="17"/>
    </location>
</feature>
<feature type="modified residue" description="N6-glutaryllysine; alternate" evidence="22">
    <location>
        <position position="17"/>
    </location>
</feature>
<feature type="modified residue" description="N6-lactoyllysine; alternate" evidence="23">
    <location>
        <position position="17"/>
    </location>
</feature>
<feature type="modified residue" description="N6-(2-hydroxyisobutyryl)lysine; alternate" evidence="19">
    <location>
        <position position="21"/>
    </location>
</feature>
<feature type="modified residue" description="N6-(beta-hydroxybutyryl)lysine; alternate" evidence="21">
    <location>
        <position position="21"/>
    </location>
</feature>
<feature type="modified residue" description="N6-acetyllysine; alternate" evidence="12 14">
    <location>
        <position position="21"/>
    </location>
</feature>
<feature type="modified residue" description="N6-butyryllysine; alternate" evidence="20">
    <location>
        <position position="21"/>
    </location>
</feature>
<feature type="modified residue" description="N6-crotonyllysine; alternate" evidence="17">
    <location>
        <position position="21"/>
    </location>
</feature>
<feature type="modified residue" description="N6-lactoyllysine; alternate" evidence="23">
    <location>
        <position position="21"/>
    </location>
</feature>
<feature type="modified residue" description="N6-(2-hydroxyisobutyryl)lysine; alternate" evidence="19">
    <location>
        <position position="24"/>
    </location>
</feature>
<feature type="modified residue" description="N6-acetyllysine; alternate" evidence="2">
    <location>
        <position position="24"/>
    </location>
</feature>
<feature type="modified residue" description="N6-crotonyllysine; alternate" evidence="17">
    <location>
        <position position="24"/>
    </location>
</feature>
<feature type="modified residue" description="N6-lactoyllysine; alternate" evidence="23">
    <location>
        <position position="24"/>
    </location>
</feature>
<feature type="modified residue" description="N6-(2-hydroxyisobutyryl)lysine" evidence="19">
    <location>
        <position position="25"/>
    </location>
</feature>
<feature type="modified residue" description="N6-(2-hydroxyisobutyryl)lysine; alternate" evidence="19">
    <location>
        <position position="35"/>
    </location>
</feature>
<feature type="modified residue" description="N6-(beta-hydroxybutyryl)lysine; alternate" evidence="21">
    <location>
        <position position="35"/>
    </location>
</feature>
<feature type="modified residue" description="N6-crotonyllysine; alternate" evidence="17">
    <location>
        <position position="35"/>
    </location>
</feature>
<feature type="modified residue" description="N6-glutaryllysine; alternate" evidence="22">
    <location>
        <position position="35"/>
    </location>
</feature>
<feature type="modified residue" description="N6-succinyllysine; alternate" evidence="18">
    <location>
        <position position="35"/>
    </location>
</feature>
<feature type="modified residue" description="PolyADP-ribosyl glutamic acid" evidence="7">
    <location>
        <position position="36"/>
    </location>
</feature>
<feature type="modified residue" description="Phosphoserine; by AMPK" evidence="7">
    <location>
        <position position="37"/>
    </location>
</feature>
<feature type="modified residue" description="N6-(2-hydroxyisobutyryl)lysine; alternate" evidence="19">
    <location>
        <position position="44"/>
    </location>
</feature>
<feature type="modified residue" description="N6-glutaryllysine; alternate" evidence="22">
    <location>
        <position position="44"/>
    </location>
</feature>
<feature type="modified residue" description="N6-lactoyllysine; alternate" evidence="23">
    <location>
        <position position="44"/>
    </location>
</feature>
<feature type="modified residue" description="N6-(2-hydroxyisobutyryl)lysine; alternate" evidence="19">
    <location>
        <position position="47"/>
    </location>
</feature>
<feature type="modified residue" description="N6-glutaryllysine; alternate" evidence="22">
    <location>
        <position position="47"/>
    </location>
</feature>
<feature type="modified residue" description="N6-methyllysine; alternate" evidence="14">
    <location>
        <position position="47"/>
    </location>
</feature>
<feature type="modified residue" description="N6,N6-dimethyllysine; alternate" evidence="14">
    <location>
        <position position="58"/>
    </location>
</feature>
<feature type="modified residue" description="N6-(2-hydroxyisobutyryl)lysine; alternate" evidence="19">
    <location>
        <position position="58"/>
    </location>
</feature>
<feature type="modified residue" description="Dimethylated arginine" evidence="9">
    <location>
        <position position="80"/>
    </location>
</feature>
<feature type="modified residue" description="N6,N6,N6-trimethyllysine; alternate" evidence="9">
    <location>
        <position position="86"/>
    </location>
</feature>
<feature type="modified residue" description="N6-(2-hydroxyisobutyryl)lysine; alternate" evidence="19">
    <location>
        <position position="86"/>
    </location>
</feature>
<feature type="modified residue" description="N6-(beta-hydroxybutyryl)lysine; alternate" evidence="21">
    <location>
        <position position="86"/>
    </location>
</feature>
<feature type="modified residue" description="N6-acetyllysine; alternate" evidence="9">
    <location>
        <position position="86"/>
    </location>
</feature>
<feature type="modified residue" description="N6-lactoyllysine; alternate" evidence="23">
    <location>
        <position position="86"/>
    </location>
</feature>
<feature type="modified residue" description="Omega-N-methylarginine" evidence="9">
    <location>
        <position position="87"/>
    </location>
</feature>
<feature type="modified residue" description="Omega-N-methylarginine" evidence="9">
    <location>
        <position position="93"/>
    </location>
</feature>
<feature type="modified residue" description="N6-(2-hydroxyisobutyryl)lysine; alternate" evidence="19">
    <location>
        <position position="109"/>
    </location>
</feature>
<feature type="modified residue" description="N6-glutaryllysine; alternate" evidence="22">
    <location>
        <position position="109"/>
    </location>
</feature>
<feature type="modified residue" description="N6-lactoyllysine; alternate" evidence="23">
    <location>
        <position position="109"/>
    </location>
</feature>
<feature type="modified residue" description="N6-methyllysine; alternate" evidence="14">
    <location>
        <position position="109"/>
    </location>
</feature>
<feature type="modified residue" description="Phosphothreonine" evidence="5">
    <location>
        <position position="116"/>
    </location>
</feature>
<feature type="modified residue" description="N6-(2-hydroxyisobutyryl)lysine; alternate" evidence="19">
    <location>
        <position position="117"/>
    </location>
</feature>
<feature type="modified residue" description="N6-(beta-hydroxybutyryl)lysine; alternate" evidence="21">
    <location>
        <position position="117"/>
    </location>
</feature>
<feature type="modified residue" description="N6-glutaryllysine; alternate" evidence="22">
    <location>
        <position position="117"/>
    </location>
</feature>
<feature type="modified residue" description="N6-lactoyllysine; alternate" evidence="23">
    <location>
        <position position="117"/>
    </location>
</feature>
<feature type="modified residue" description="N6-malonyllysine; alternate" evidence="18">
    <location>
        <position position="117"/>
    </location>
</feature>
<feature type="modified residue" description="N6-methylated lysine; alternate" evidence="5">
    <location>
        <position position="117"/>
    </location>
</feature>
<feature type="modified residue" description="N6-succinyllysine; alternate" evidence="18">
    <location>
        <position position="117"/>
    </location>
</feature>
<feature type="modified residue" description="N6-(2-hydroxyisobutyryl)lysine; alternate" evidence="19">
    <location>
        <position position="121"/>
    </location>
</feature>
<feature type="modified residue" description="N6-(beta-hydroxybutyryl)lysine; alternate" evidence="21">
    <location>
        <position position="121"/>
    </location>
</feature>
<feature type="modified residue" description="N6-glutaryllysine; alternate" evidence="22">
    <location>
        <position position="121"/>
    </location>
</feature>
<feature type="modified residue" description="N6-lactoyllysine; alternate" evidence="23">
    <location>
        <position position="121"/>
    </location>
</feature>
<feature type="modified residue" description="N6-succinyllysine; alternate" evidence="18">
    <location>
        <position position="121"/>
    </location>
</feature>
<feature type="glycosylation site" description="O-linked (GlcNAc) serine" evidence="4">
    <location>
        <position position="113"/>
    </location>
</feature>
<feature type="cross-link" description="Glycyl lysine isopeptide (Lys-Gly) (interchain with G-Cter in SUMO2); alternate" evidence="3">
    <location>
        <position position="6"/>
    </location>
</feature>
<feature type="cross-link" description="Glycyl lysine isopeptide (Lys-Gly) (interchain with G-Cter in SUMO2); alternate" evidence="6">
    <location>
        <position position="21"/>
    </location>
</feature>
<feature type="cross-link" description="Glycyl lysine isopeptide (Lys-Gly) (interchain with G-Cter in ubiquitin); alternate" evidence="16">
    <location>
        <position position="35"/>
    </location>
</feature>
<feature type="cross-link" description="Glycyl lysine isopeptide (Lys-Gly) (interchain with G-Cter in ubiquitin); alternate" evidence="13 14 15">
    <location>
        <position position="121"/>
    </location>
</feature>
<organism>
    <name type="scientific">Homo sapiens</name>
    <name type="common">Human</name>
    <dbReference type="NCBI Taxonomy" id="9606"/>
    <lineage>
        <taxon>Eukaryota</taxon>
        <taxon>Metazoa</taxon>
        <taxon>Chordata</taxon>
        <taxon>Craniata</taxon>
        <taxon>Vertebrata</taxon>
        <taxon>Euteleostomi</taxon>
        <taxon>Mammalia</taxon>
        <taxon>Eutheria</taxon>
        <taxon>Euarchontoglires</taxon>
        <taxon>Primates</taxon>
        <taxon>Haplorrhini</taxon>
        <taxon>Catarrhini</taxon>
        <taxon>Hominidae</taxon>
        <taxon>Homo</taxon>
    </lineage>
</organism>
<comment type="function">
    <text>Core component of nucleosome. Nucleosomes wrap and compact DNA into chromatin, limiting DNA accessibility to the cellular machineries which require DNA as a template. Histones thereby play a central role in transcription regulation, DNA repair, DNA replication and chromosomal stability. DNA accessibility is regulated via a complex set of post-translational modifications of histones, also called histone code, and nucleosome remodeling.</text>
</comment>
<comment type="subunit">
    <text>The nucleosome is a histone octamer containing two molecules each of H2A, H2B, H3 and H4 assembled in one H3-H4 heterotetramer and two H2A-H2B heterodimers. The octamer wraps approximately 147 bp of DNA.</text>
</comment>
<comment type="subcellular location">
    <subcellularLocation>
        <location>Nucleus</location>
    </subcellularLocation>
    <subcellularLocation>
        <location>Chromosome</location>
    </subcellularLocation>
</comment>
<comment type="PTM">
    <text evidence="14">Monoubiquitination at Lys-35 (H2BK34Ub) by the MSL1/MSL2 dimer is required for histone H3 'Lys-4' (H3K4me) and 'Lys-79' (H3K79me) methylation and transcription activation at specific gene loci, such as HOXA9 and MEIS1 loci. Similarly, monoubiquitination at Lys-121 (H2BK120Ub) by the RNF20/40 complex gives a specific tag for epigenetic transcriptional activation and is also prerequisite for histone H3 'Lys-4' and 'Lys-79' methylation. It also functions cooperatively with the FACT dimer to stimulate elongation by RNA polymerase II. H2BK120Ub also acts as a regulator of mRNA splicing: deubiquitination by USP49 is required for efficient cotranscriptional splicing of a large set of exons.</text>
</comment>
<comment type="PTM">
    <text evidence="7 11">Phosphorylation at Ser-37 (H2BS36ph) by AMPK in response to stress promotes transcription (By similarity). Phosphorylated on Ser-15 (H2BS14ph) by STK4/MST1 during apoptosis; which facilitates apoptotic chromatin condensation (PubMed:12757711). Also phosphorylated on Ser-15 in response to DNA double strand breaks (DSBs), and in correlation with somatic hypermutation and immunoglobulin class-switch recombination.</text>
</comment>
<comment type="PTM">
    <text evidence="4">GlcNAcylation at Ser-113 promotes monoubiquitination of Lys-121. It fluctuates in response to extracellular glucose, and associates with transcribed genes (By similarity).</text>
</comment>
<comment type="PTM">
    <text evidence="8 24">ADP-ribosylated by PARP1 or PARP2 on Ser-7 (H2BS6ADPr) in response to DNA damage (PubMed:34874266). H2BS6ADPr promotes recruitment of CHD1L (PubMed:34874266). Poly ADP-ribosylation on Glu-36 (H2BE35ADPr) by PARP1 regulates adipogenesis: it inhibits phosphorylation at Ser-37 (H2BS36ph), thereby blocking expression of pro-adipogenetic genes (By similarity).</text>
</comment>
<comment type="PTM">
    <text evidence="17">Crotonylation (Kcr) is specifically present in male germ cells and marks testis-specific genes in post-meiotic cells, including X-linked genes that escape sex chromosome inactivation in haploid cells. Crotonylation marks active promoters and enhancers and confers resistance to transcriptional repressors. It is also associated with post-meiotically activated genes on autosomes.</text>
</comment>
<comment type="PTM">
    <text evidence="23">Lactylated in macrophages by EP300/P300 by using lactoyl-CoA directly derived from endogenous or exogenous lactate, leading to stimulates gene transcription.</text>
</comment>
<comment type="similarity">
    <text evidence="25">Belongs to the histone H2B family.</text>
</comment>
<name>H2B3B_HUMAN</name>
<keyword id="KW-0002">3D-structure</keyword>
<keyword id="KW-0007">Acetylation</keyword>
<keyword id="KW-0013">ADP-ribosylation</keyword>
<keyword id="KW-0158">Chromosome</keyword>
<keyword id="KW-0903">Direct protein sequencing</keyword>
<keyword id="KW-0238">DNA-binding</keyword>
<keyword id="KW-0325">Glycoprotein</keyword>
<keyword id="KW-0379">Hydroxylation</keyword>
<keyword id="KW-1017">Isopeptide bond</keyword>
<keyword id="KW-0488">Methylation</keyword>
<keyword id="KW-0544">Nucleosome core</keyword>
<keyword id="KW-0539">Nucleus</keyword>
<keyword id="KW-0597">Phosphoprotein</keyword>
<keyword id="KW-1267">Proteomics identification</keyword>
<keyword id="KW-1185">Reference proteome</keyword>
<keyword id="KW-0832">Ubl conjugation</keyword>
<sequence length="126" mass="13908">MPDPSKSAPAPKKGSKKAVTKAQKKDGKKRKRGRKESYSIYVYKVLKQVHPDTGISSKAMGIMNSFVNDIFERIASEASRLAHYNKRSTITSREVQTAVRLLLPGELAKHAVSEGTKAVTKYTSSK</sequence>